<proteinExistence type="evidence at transcript level"/>
<dbReference type="EMBL" id="BT091312">
    <property type="protein sequence ID" value="ACU15456.1"/>
    <property type="molecule type" value="mRNA"/>
</dbReference>
<dbReference type="RefSeq" id="NP_001237259.1">
    <property type="nucleotide sequence ID" value="NM_001250330.1"/>
</dbReference>
<dbReference type="SMR" id="C6T1K6"/>
<dbReference type="FunCoup" id="C6T1K6">
    <property type="interactions" value="571"/>
</dbReference>
<dbReference type="PaxDb" id="3847-GLYMA10G08740.1"/>
<dbReference type="GeneID" id="100500387"/>
<dbReference type="KEGG" id="gmx:100500387"/>
<dbReference type="eggNOG" id="ENOG502QZV7">
    <property type="taxonomic scope" value="Eukaryota"/>
</dbReference>
<dbReference type="InParanoid" id="C6T1K6"/>
<dbReference type="OrthoDB" id="753675at2759"/>
<dbReference type="Proteomes" id="UP000008827">
    <property type="component" value="Unplaced"/>
</dbReference>
<dbReference type="GO" id="GO:0048226">
    <property type="term" value="C:Casparian strip"/>
    <property type="evidence" value="ECO:0000318"/>
    <property type="project" value="GO_Central"/>
</dbReference>
<dbReference type="GO" id="GO:0005886">
    <property type="term" value="C:plasma membrane"/>
    <property type="evidence" value="ECO:0000318"/>
    <property type="project" value="GO_Central"/>
</dbReference>
<dbReference type="GO" id="GO:0042545">
    <property type="term" value="P:cell wall modification"/>
    <property type="evidence" value="ECO:0000318"/>
    <property type="project" value="GO_Central"/>
</dbReference>
<dbReference type="GO" id="GO:0007043">
    <property type="term" value="P:cell-cell junction assembly"/>
    <property type="evidence" value="ECO:0000318"/>
    <property type="project" value="GO_Central"/>
</dbReference>
<dbReference type="InterPro" id="IPR006459">
    <property type="entry name" value="CASP/CASPL"/>
</dbReference>
<dbReference type="InterPro" id="IPR006702">
    <property type="entry name" value="CASP_dom"/>
</dbReference>
<dbReference type="InterPro" id="IPR044173">
    <property type="entry name" value="CASPL"/>
</dbReference>
<dbReference type="NCBIfam" id="TIGR01569">
    <property type="entry name" value="A_tha_TIGR01569"/>
    <property type="match status" value="1"/>
</dbReference>
<dbReference type="PANTHER" id="PTHR36488:SF11">
    <property type="entry name" value="CASP-LIKE PROTEIN"/>
    <property type="match status" value="1"/>
</dbReference>
<dbReference type="PANTHER" id="PTHR36488">
    <property type="entry name" value="CASP-LIKE PROTEIN 1U1"/>
    <property type="match status" value="1"/>
</dbReference>
<dbReference type="Pfam" id="PF04535">
    <property type="entry name" value="CASP_dom"/>
    <property type="match status" value="1"/>
</dbReference>
<name>CASP3_SOYBN</name>
<organism>
    <name type="scientific">Glycine max</name>
    <name type="common">Soybean</name>
    <name type="synonym">Glycine hispida</name>
    <dbReference type="NCBI Taxonomy" id="3847"/>
    <lineage>
        <taxon>Eukaryota</taxon>
        <taxon>Viridiplantae</taxon>
        <taxon>Streptophyta</taxon>
        <taxon>Embryophyta</taxon>
        <taxon>Tracheophyta</taxon>
        <taxon>Spermatophyta</taxon>
        <taxon>Magnoliopsida</taxon>
        <taxon>eudicotyledons</taxon>
        <taxon>Gunneridae</taxon>
        <taxon>Pentapetalae</taxon>
        <taxon>rosids</taxon>
        <taxon>fabids</taxon>
        <taxon>Fabales</taxon>
        <taxon>Fabaceae</taxon>
        <taxon>Papilionoideae</taxon>
        <taxon>50 kb inversion clade</taxon>
        <taxon>NPAAA clade</taxon>
        <taxon>indigoferoid/millettioid clade</taxon>
        <taxon>Phaseoleae</taxon>
        <taxon>Glycine</taxon>
        <taxon>Glycine subgen. Soja</taxon>
    </lineage>
</organism>
<reference key="1">
    <citation type="submission" date="2009-08" db="EMBL/GenBank/DDBJ databases">
        <authorList>
            <person name="Cheung F."/>
            <person name="Xiao Y."/>
            <person name="Chan A."/>
            <person name="Moskal W."/>
            <person name="Town C.D."/>
        </authorList>
    </citation>
    <scope>NUCLEOTIDE SEQUENCE [LARGE SCALE MRNA]</scope>
</reference>
<reference key="2">
    <citation type="journal article" date="2014" name="Plant Physiol.">
        <title>Functional and evolutionary analysis of the CASPARIAN STRIP MEMBRANE DOMAIN PROTEIN family.</title>
        <authorList>
            <person name="Roppolo D."/>
            <person name="Boeckmann B."/>
            <person name="Pfister A."/>
            <person name="Boutet E."/>
            <person name="Rubio M.C."/>
            <person name="Denervaud-Tendon V."/>
            <person name="Vermeer J.E."/>
            <person name="Gheyselinck J."/>
            <person name="Xenarios I."/>
            <person name="Geldner N."/>
        </authorList>
    </citation>
    <scope>GENE FAMILY</scope>
    <scope>NOMENCLATURE</scope>
</reference>
<sequence length="195" mass="20810">MSTTIDVPESNNVAKEKVLLLGARPRPGGWKKGVAIMDFILRLGAIAAAPGAAATMGTSDQTLPFFTQFFQFEASYDSFTTFQFFVITMALVAGYLVLSLPFSIVVIIRPHAVGPRLFLIILDTVFLTLATASGASAAAIVYLAHNGNQDSNWLAICNQFGDFCAQTSGAVVSSLVSVVIFVLLIVMSALALRRN</sequence>
<accession>C6T1K6</accession>
<feature type="chain" id="PRO_0000391519" description="Casparian strip membrane protein 3">
    <location>
        <begin position="1"/>
        <end position="195"/>
    </location>
</feature>
<feature type="topological domain" description="Cytoplasmic" evidence="2">
    <location>
        <begin position="1"/>
        <end position="33"/>
    </location>
</feature>
<feature type="transmembrane region" description="Helical" evidence="2">
    <location>
        <begin position="34"/>
        <end position="54"/>
    </location>
</feature>
<feature type="topological domain" description="Extracellular" evidence="2">
    <location>
        <begin position="55"/>
        <end position="86"/>
    </location>
</feature>
<feature type="transmembrane region" description="Helical" evidence="2">
    <location>
        <begin position="87"/>
        <end position="107"/>
    </location>
</feature>
<feature type="topological domain" description="Cytoplasmic" evidence="2">
    <location>
        <begin position="108"/>
        <end position="116"/>
    </location>
</feature>
<feature type="transmembrane region" description="Helical" evidence="2">
    <location>
        <begin position="117"/>
        <end position="137"/>
    </location>
</feature>
<feature type="topological domain" description="Extracellular" evidence="2">
    <location>
        <begin position="138"/>
        <end position="169"/>
    </location>
</feature>
<feature type="transmembrane region" description="Helical" evidence="2">
    <location>
        <begin position="170"/>
        <end position="190"/>
    </location>
</feature>
<feature type="topological domain" description="Cytoplasmic" evidence="2">
    <location>
        <begin position="191"/>
        <end position="195"/>
    </location>
</feature>
<keyword id="KW-1003">Cell membrane</keyword>
<keyword id="KW-0961">Cell wall biogenesis/degradation</keyword>
<keyword id="KW-0472">Membrane</keyword>
<keyword id="KW-1185">Reference proteome</keyword>
<keyword id="KW-0812">Transmembrane</keyword>
<keyword id="KW-1133">Transmembrane helix</keyword>
<protein>
    <recommendedName>
        <fullName>Casparian strip membrane protein 3</fullName>
        <shortName>GmCASP3</shortName>
    </recommendedName>
</protein>
<comment type="function">
    <text evidence="1">Regulates membrane-cell wall junctions and localized cell wall deposition. Required for establishment of the Casparian strip membrane domain (CSD) and the subsequent formation of Casparian strips, a cell wall modification of the root endodermis that determines an apoplastic barrier between the intraorganismal apoplasm and the extraorganismal apoplasm and prevents lateral diffusion (By similarity).</text>
</comment>
<comment type="subunit">
    <text evidence="1">Homodimer and heterodimers.</text>
</comment>
<comment type="subcellular location">
    <subcellularLocation>
        <location evidence="1">Cell membrane</location>
        <topology evidence="1">Multi-pass membrane protein</topology>
    </subcellularLocation>
    <text evidence="1">Very restricted localization following a belt shape within the plasma membrane which coincides with the position of the Casparian strip membrane domain in the root endodermis.</text>
</comment>
<comment type="similarity">
    <text evidence="3">Belongs to the Casparian strip membrane proteins (CASP) family.</text>
</comment>
<evidence type="ECO:0000250" key="1"/>
<evidence type="ECO:0000255" key="2"/>
<evidence type="ECO:0000305" key="3"/>